<feature type="chain" id="PRO_1000136734" description="Ribosome maturation factor RimP">
    <location>
        <begin position="1"/>
        <end position="156"/>
    </location>
</feature>
<gene>
    <name evidence="1" type="primary">rimP</name>
    <name type="ordered locus">BcerKBAB4_3639</name>
</gene>
<reference key="1">
    <citation type="journal article" date="2008" name="Chem. Biol. Interact.">
        <title>Extending the Bacillus cereus group genomics to putative food-borne pathogens of different toxicity.</title>
        <authorList>
            <person name="Lapidus A."/>
            <person name="Goltsman E."/>
            <person name="Auger S."/>
            <person name="Galleron N."/>
            <person name="Segurens B."/>
            <person name="Dossat C."/>
            <person name="Land M.L."/>
            <person name="Broussolle V."/>
            <person name="Brillard J."/>
            <person name="Guinebretiere M.-H."/>
            <person name="Sanchis V."/>
            <person name="Nguen-the C."/>
            <person name="Lereclus D."/>
            <person name="Richardson P."/>
            <person name="Wincker P."/>
            <person name="Weissenbach J."/>
            <person name="Ehrlich S.D."/>
            <person name="Sorokin A."/>
        </authorList>
    </citation>
    <scope>NUCLEOTIDE SEQUENCE [LARGE SCALE GENOMIC DNA]</scope>
    <source>
        <strain>KBAB4</strain>
    </source>
</reference>
<keyword id="KW-0963">Cytoplasm</keyword>
<keyword id="KW-0690">Ribosome biogenesis</keyword>
<name>RIMP_BACMK</name>
<organism>
    <name type="scientific">Bacillus mycoides (strain KBAB4)</name>
    <name type="common">Bacillus weihenstephanensis</name>
    <dbReference type="NCBI Taxonomy" id="315730"/>
    <lineage>
        <taxon>Bacteria</taxon>
        <taxon>Bacillati</taxon>
        <taxon>Bacillota</taxon>
        <taxon>Bacilli</taxon>
        <taxon>Bacillales</taxon>
        <taxon>Bacillaceae</taxon>
        <taxon>Bacillus</taxon>
        <taxon>Bacillus cereus group</taxon>
    </lineage>
</organism>
<sequence>MDKKVTEIVEAFAQPIVEELNLELVDVEYVQEGQDWFLRVFIDSEKGVEIEECGAVSERLSEALDKEDPIPHLYFLDVSSPGAERPLKKEKDFQQAVGKQVAIKTYKPIDGEKMFEGKLLSYDGNTITLLLTIKTRKKEIQIPMDKVANARLAVTF</sequence>
<proteinExistence type="inferred from homology"/>
<protein>
    <recommendedName>
        <fullName evidence="1">Ribosome maturation factor RimP</fullName>
    </recommendedName>
</protein>
<comment type="function">
    <text evidence="1">Required for maturation of 30S ribosomal subunits.</text>
</comment>
<comment type="subcellular location">
    <subcellularLocation>
        <location evidence="1">Cytoplasm</location>
    </subcellularLocation>
</comment>
<comment type="similarity">
    <text evidence="1">Belongs to the RimP family.</text>
</comment>
<accession>A9VT54</accession>
<evidence type="ECO:0000255" key="1">
    <source>
        <dbReference type="HAMAP-Rule" id="MF_01077"/>
    </source>
</evidence>
<dbReference type="EMBL" id="CP000903">
    <property type="protein sequence ID" value="ABY44810.1"/>
    <property type="molecule type" value="Genomic_DNA"/>
</dbReference>
<dbReference type="RefSeq" id="WP_002088165.1">
    <property type="nucleotide sequence ID" value="NC_010184.1"/>
</dbReference>
<dbReference type="SMR" id="A9VT54"/>
<dbReference type="GeneID" id="66266619"/>
<dbReference type="KEGG" id="bwe:BcerKBAB4_3639"/>
<dbReference type="eggNOG" id="COG0779">
    <property type="taxonomic scope" value="Bacteria"/>
</dbReference>
<dbReference type="HOGENOM" id="CLU_070525_2_0_9"/>
<dbReference type="Proteomes" id="UP000002154">
    <property type="component" value="Chromosome"/>
</dbReference>
<dbReference type="GO" id="GO:0005829">
    <property type="term" value="C:cytosol"/>
    <property type="evidence" value="ECO:0007669"/>
    <property type="project" value="TreeGrafter"/>
</dbReference>
<dbReference type="GO" id="GO:0000028">
    <property type="term" value="P:ribosomal small subunit assembly"/>
    <property type="evidence" value="ECO:0007669"/>
    <property type="project" value="TreeGrafter"/>
</dbReference>
<dbReference type="GO" id="GO:0006412">
    <property type="term" value="P:translation"/>
    <property type="evidence" value="ECO:0007669"/>
    <property type="project" value="TreeGrafter"/>
</dbReference>
<dbReference type="CDD" id="cd01734">
    <property type="entry name" value="YlxS_C"/>
    <property type="match status" value="1"/>
</dbReference>
<dbReference type="FunFam" id="2.30.30.180:FF:000002">
    <property type="entry name" value="Ribosome maturation factor RimP"/>
    <property type="match status" value="1"/>
</dbReference>
<dbReference type="FunFam" id="3.30.300.70:FF:000001">
    <property type="entry name" value="Ribosome maturation factor RimP"/>
    <property type="match status" value="1"/>
</dbReference>
<dbReference type="Gene3D" id="2.30.30.180">
    <property type="entry name" value="Ribosome maturation factor RimP, C-terminal domain"/>
    <property type="match status" value="1"/>
</dbReference>
<dbReference type="Gene3D" id="3.30.300.70">
    <property type="entry name" value="RimP-like superfamily, N-terminal"/>
    <property type="match status" value="1"/>
</dbReference>
<dbReference type="HAMAP" id="MF_01077">
    <property type="entry name" value="RimP"/>
    <property type="match status" value="1"/>
</dbReference>
<dbReference type="InterPro" id="IPR003728">
    <property type="entry name" value="Ribosome_maturation_RimP"/>
</dbReference>
<dbReference type="InterPro" id="IPR028998">
    <property type="entry name" value="RimP_C"/>
</dbReference>
<dbReference type="InterPro" id="IPR036847">
    <property type="entry name" value="RimP_C_sf"/>
</dbReference>
<dbReference type="InterPro" id="IPR028989">
    <property type="entry name" value="RimP_N"/>
</dbReference>
<dbReference type="InterPro" id="IPR035956">
    <property type="entry name" value="RimP_N_sf"/>
</dbReference>
<dbReference type="NCBIfam" id="NF000928">
    <property type="entry name" value="PRK00092.1-2"/>
    <property type="match status" value="1"/>
</dbReference>
<dbReference type="PANTHER" id="PTHR33867">
    <property type="entry name" value="RIBOSOME MATURATION FACTOR RIMP"/>
    <property type="match status" value="1"/>
</dbReference>
<dbReference type="PANTHER" id="PTHR33867:SF1">
    <property type="entry name" value="RIBOSOME MATURATION FACTOR RIMP"/>
    <property type="match status" value="1"/>
</dbReference>
<dbReference type="Pfam" id="PF17384">
    <property type="entry name" value="DUF150_C"/>
    <property type="match status" value="1"/>
</dbReference>
<dbReference type="Pfam" id="PF02576">
    <property type="entry name" value="RimP_N"/>
    <property type="match status" value="1"/>
</dbReference>
<dbReference type="SUPFAM" id="SSF74942">
    <property type="entry name" value="YhbC-like, C-terminal domain"/>
    <property type="match status" value="1"/>
</dbReference>
<dbReference type="SUPFAM" id="SSF75420">
    <property type="entry name" value="YhbC-like, N-terminal domain"/>
    <property type="match status" value="1"/>
</dbReference>